<keyword id="KW-1185">Reference proteome</keyword>
<keyword id="KW-0678">Repressor</keyword>
<keyword id="KW-0687">Ribonucleoprotein</keyword>
<keyword id="KW-0689">Ribosomal protein</keyword>
<keyword id="KW-0694">RNA-binding</keyword>
<keyword id="KW-0699">rRNA-binding</keyword>
<keyword id="KW-0810">Translation regulation</keyword>
<keyword id="KW-0820">tRNA-binding</keyword>
<gene>
    <name evidence="1" type="primary">rpl1</name>
    <name type="ordered locus">MK0825</name>
</gene>
<reference key="1">
    <citation type="journal article" date="2002" name="Proc. Natl. Acad. Sci. U.S.A.">
        <title>The complete genome of hyperthermophile Methanopyrus kandleri AV19 and monophyly of archaeal methanogens.</title>
        <authorList>
            <person name="Slesarev A.I."/>
            <person name="Mezhevaya K.V."/>
            <person name="Makarova K.S."/>
            <person name="Polushin N.N."/>
            <person name="Shcherbinina O.V."/>
            <person name="Shakhova V.V."/>
            <person name="Belova G.I."/>
            <person name="Aravind L."/>
            <person name="Natale D.A."/>
            <person name="Rogozin I.B."/>
            <person name="Tatusov R.L."/>
            <person name="Wolf Y.I."/>
            <person name="Stetter K.O."/>
            <person name="Malykh A.G."/>
            <person name="Koonin E.V."/>
            <person name="Kozyavkin S.A."/>
        </authorList>
    </citation>
    <scope>NUCLEOTIDE SEQUENCE [LARGE SCALE GENOMIC DNA]</scope>
    <source>
        <strain>AV19 / DSM 6324 / JCM 9639 / NBRC 100938</strain>
    </source>
</reference>
<sequence length="214" mass="24111">MTITEEDLIEPLRKVVEYSPPRRFLETVDMIVNVKGVDLSDPSQRIDKEVVLPHGRGKPVNVCVIAEGEMAREAEEAGATVINREKLEELAENVREAKKIARRHEFFYAQVDLMPDVGRVLGPVLGPRGKMAKPVPPNADIRALIERAHRTARVRMRDQPVIHTVIGARNMEPEQLAENAMAVLREITSELEKSWAQIDSVYVKTTMGPAERVY</sequence>
<protein>
    <recommendedName>
        <fullName evidence="1">Large ribosomal subunit protein uL1</fullName>
    </recommendedName>
    <alternativeName>
        <fullName evidence="2">50S ribosomal protein L1</fullName>
    </alternativeName>
</protein>
<dbReference type="EMBL" id="AE009439">
    <property type="protein sequence ID" value="AAM02038.1"/>
    <property type="molecule type" value="Genomic_DNA"/>
</dbReference>
<dbReference type="RefSeq" id="WP_011019193.1">
    <property type="nucleotide sequence ID" value="NC_003551.1"/>
</dbReference>
<dbReference type="SMR" id="Q8TX51"/>
<dbReference type="FunCoup" id="Q8TX51">
    <property type="interactions" value="138"/>
</dbReference>
<dbReference type="STRING" id="190192.MK0825"/>
<dbReference type="PaxDb" id="190192-MK0825"/>
<dbReference type="EnsemblBacteria" id="AAM02038">
    <property type="protein sequence ID" value="AAM02038"/>
    <property type="gene ID" value="MK0825"/>
</dbReference>
<dbReference type="GeneID" id="1476926"/>
<dbReference type="KEGG" id="mka:MK0825"/>
<dbReference type="PATRIC" id="fig|190192.8.peg.867"/>
<dbReference type="HOGENOM" id="CLU_062853_4_0_2"/>
<dbReference type="InParanoid" id="Q8TX51"/>
<dbReference type="OrthoDB" id="10382at2157"/>
<dbReference type="Proteomes" id="UP000001826">
    <property type="component" value="Chromosome"/>
</dbReference>
<dbReference type="GO" id="GO:0015934">
    <property type="term" value="C:large ribosomal subunit"/>
    <property type="evidence" value="ECO:0007669"/>
    <property type="project" value="InterPro"/>
</dbReference>
<dbReference type="GO" id="GO:0019843">
    <property type="term" value="F:rRNA binding"/>
    <property type="evidence" value="ECO:0007669"/>
    <property type="project" value="UniProtKB-UniRule"/>
</dbReference>
<dbReference type="GO" id="GO:0003735">
    <property type="term" value="F:structural constituent of ribosome"/>
    <property type="evidence" value="ECO:0007669"/>
    <property type="project" value="InterPro"/>
</dbReference>
<dbReference type="GO" id="GO:0000049">
    <property type="term" value="F:tRNA binding"/>
    <property type="evidence" value="ECO:0007669"/>
    <property type="project" value="UniProtKB-KW"/>
</dbReference>
<dbReference type="GO" id="GO:0006417">
    <property type="term" value="P:regulation of translation"/>
    <property type="evidence" value="ECO:0007669"/>
    <property type="project" value="UniProtKB-KW"/>
</dbReference>
<dbReference type="GO" id="GO:0006412">
    <property type="term" value="P:translation"/>
    <property type="evidence" value="ECO:0007669"/>
    <property type="project" value="UniProtKB-UniRule"/>
</dbReference>
<dbReference type="CDD" id="cd00403">
    <property type="entry name" value="Ribosomal_L1"/>
    <property type="match status" value="1"/>
</dbReference>
<dbReference type="FunFam" id="3.40.50.790:FF:000005">
    <property type="entry name" value="50S ribosomal protein L1"/>
    <property type="match status" value="1"/>
</dbReference>
<dbReference type="Gene3D" id="3.30.190.20">
    <property type="match status" value="1"/>
</dbReference>
<dbReference type="Gene3D" id="3.40.50.790">
    <property type="match status" value="1"/>
</dbReference>
<dbReference type="HAMAP" id="MF_01318_A">
    <property type="entry name" value="Ribosomal_uL1_A"/>
    <property type="match status" value="1"/>
</dbReference>
<dbReference type="InterPro" id="IPR002143">
    <property type="entry name" value="Ribosomal_uL1"/>
</dbReference>
<dbReference type="InterPro" id="IPR023674">
    <property type="entry name" value="Ribosomal_uL1-like"/>
</dbReference>
<dbReference type="InterPro" id="IPR028364">
    <property type="entry name" value="Ribosomal_uL1/biogenesis"/>
</dbReference>
<dbReference type="InterPro" id="IPR016095">
    <property type="entry name" value="Ribosomal_uL1_3-a/b-sand"/>
</dbReference>
<dbReference type="InterPro" id="IPR023669">
    <property type="entry name" value="Ribosomal_uL1_arc"/>
</dbReference>
<dbReference type="NCBIfam" id="NF003244">
    <property type="entry name" value="PRK04203.1"/>
    <property type="match status" value="1"/>
</dbReference>
<dbReference type="PANTHER" id="PTHR36427">
    <property type="entry name" value="54S RIBOSOMAL PROTEIN L1, MITOCHONDRIAL"/>
    <property type="match status" value="1"/>
</dbReference>
<dbReference type="PANTHER" id="PTHR36427:SF3">
    <property type="entry name" value="LARGE RIBOSOMAL SUBUNIT PROTEIN UL1M"/>
    <property type="match status" value="1"/>
</dbReference>
<dbReference type="Pfam" id="PF00687">
    <property type="entry name" value="Ribosomal_L1"/>
    <property type="match status" value="1"/>
</dbReference>
<dbReference type="PIRSF" id="PIRSF002155">
    <property type="entry name" value="Ribosomal_L1"/>
    <property type="match status" value="1"/>
</dbReference>
<dbReference type="SUPFAM" id="SSF56808">
    <property type="entry name" value="Ribosomal protein L1"/>
    <property type="match status" value="1"/>
</dbReference>
<name>RL1_METKA</name>
<organism>
    <name type="scientific">Methanopyrus kandleri (strain AV19 / DSM 6324 / JCM 9639 / NBRC 100938)</name>
    <dbReference type="NCBI Taxonomy" id="190192"/>
    <lineage>
        <taxon>Archaea</taxon>
        <taxon>Methanobacteriati</taxon>
        <taxon>Methanobacteriota</taxon>
        <taxon>Methanomada group</taxon>
        <taxon>Methanopyri</taxon>
        <taxon>Methanopyrales</taxon>
        <taxon>Methanopyraceae</taxon>
        <taxon>Methanopyrus</taxon>
    </lineage>
</organism>
<evidence type="ECO:0000255" key="1">
    <source>
        <dbReference type="HAMAP-Rule" id="MF_01318"/>
    </source>
</evidence>
<evidence type="ECO:0000305" key="2"/>
<accession>Q8TX51</accession>
<proteinExistence type="inferred from homology"/>
<comment type="function">
    <text evidence="1">Binds directly to 23S rRNA. Probably involved in E site tRNA release.</text>
</comment>
<comment type="function">
    <text evidence="1">Protein L1 is also a translational repressor protein, it controls the translation of its operon by binding to its mRNA.</text>
</comment>
<comment type="subunit">
    <text evidence="1">Part of the 50S ribosomal subunit.</text>
</comment>
<comment type="similarity">
    <text evidence="1">Belongs to the universal ribosomal protein uL1 family.</text>
</comment>
<feature type="chain" id="PRO_0000125799" description="Large ribosomal subunit protein uL1">
    <location>
        <begin position="1"/>
        <end position="214"/>
    </location>
</feature>